<reference key="1">
    <citation type="book" date="2006" name="Texas Tech University Special Publications">
        <title>Molecular and morphological analyses of the sportive lemurs (family Megaladapidae: genus Lepilemur) reveals 11 previously unrecognized species.</title>
        <editorList>
            <person name="Baker R.J."/>
        </editorList>
        <authorList>
            <person name="Louis E.E. Jr."/>
            <person name="Engberg S.E."/>
            <person name="Lei R."/>
            <person name="Geng H."/>
            <person name="Sommer J.A."/>
            <person name="Randriamampionona R."/>
            <person name="Randriamanana J.C."/>
            <person name="Zaonarivelo J.R."/>
            <person name="Andriantompohavana R."/>
            <person name="Randria G."/>
            <person name="Ramaromilanto B."/>
            <person name="Rakotoarisoa G."/>
            <person name="Rooney A."/>
            <person name="Brenneman R.A."/>
        </authorList>
    </citation>
    <scope>NUCLEOTIDE SEQUENCE [GENOMIC DNA]</scope>
    <source>
        <strain>Isolate JAR3.38</strain>
        <strain>Isolate JAR3.39</strain>
        <strain>Isolate JAR3.46</strain>
        <strain>Isolate NARA4.20</strain>
    </source>
</reference>
<accession>Q00HT4</accession>
<accession>Q00H84</accession>
<gene>
    <name type="primary">MT-ND4L</name>
    <name type="synonym">MTND4L</name>
    <name type="synonym">NADH4L</name>
    <name type="synonym">ND4L</name>
</gene>
<organism>
    <name type="scientific">Lepilemur seali</name>
    <name type="common">Seal's sportive lemur</name>
    <dbReference type="NCBI Taxonomy" id="236288"/>
    <lineage>
        <taxon>Eukaryota</taxon>
        <taxon>Metazoa</taxon>
        <taxon>Chordata</taxon>
        <taxon>Craniata</taxon>
        <taxon>Vertebrata</taxon>
        <taxon>Euteleostomi</taxon>
        <taxon>Mammalia</taxon>
        <taxon>Eutheria</taxon>
        <taxon>Euarchontoglires</taxon>
        <taxon>Primates</taxon>
        <taxon>Strepsirrhini</taxon>
        <taxon>Lemuriformes</taxon>
        <taxon>Lepilemuridae</taxon>
        <taxon>Lepilemur</taxon>
    </lineage>
</organism>
<comment type="function">
    <text evidence="1">Core subunit of the mitochondrial membrane respiratory chain NADH dehydrogenase (Complex I) which catalyzes electron transfer from NADH through the respiratory chain, using ubiquinone as an electron acceptor. Part of the enzyme membrane arm which is embedded in the lipid bilayer and involved in proton translocation.</text>
</comment>
<comment type="catalytic activity">
    <reaction evidence="1">
        <text>a ubiquinone + NADH + 5 H(+)(in) = a ubiquinol + NAD(+) + 4 H(+)(out)</text>
        <dbReference type="Rhea" id="RHEA:29091"/>
        <dbReference type="Rhea" id="RHEA-COMP:9565"/>
        <dbReference type="Rhea" id="RHEA-COMP:9566"/>
        <dbReference type="ChEBI" id="CHEBI:15378"/>
        <dbReference type="ChEBI" id="CHEBI:16389"/>
        <dbReference type="ChEBI" id="CHEBI:17976"/>
        <dbReference type="ChEBI" id="CHEBI:57540"/>
        <dbReference type="ChEBI" id="CHEBI:57945"/>
        <dbReference type="EC" id="7.1.1.2"/>
    </reaction>
    <physiologicalReaction direction="left-to-right" evidence="1">
        <dbReference type="Rhea" id="RHEA:29092"/>
    </physiologicalReaction>
</comment>
<comment type="subunit">
    <text evidence="2">Core subunit of respiratory chain NADH dehydrogenase (Complex I) which is composed of 45 different subunits.</text>
</comment>
<comment type="subcellular location">
    <subcellularLocation>
        <location evidence="2">Mitochondrion inner membrane</location>
        <topology evidence="3">Multi-pass membrane protein</topology>
    </subcellularLocation>
</comment>
<comment type="similarity">
    <text evidence="4">Belongs to the complex I subunit 4L family.</text>
</comment>
<geneLocation type="mitochondrion"/>
<protein>
    <recommendedName>
        <fullName>NADH-ubiquinone oxidoreductase chain 4L</fullName>
        <ecNumber>7.1.1.2</ecNumber>
    </recommendedName>
    <alternativeName>
        <fullName>NADH dehydrogenase subunit 4L</fullName>
    </alternativeName>
</protein>
<keyword id="KW-0249">Electron transport</keyword>
<keyword id="KW-0472">Membrane</keyword>
<keyword id="KW-0496">Mitochondrion</keyword>
<keyword id="KW-0999">Mitochondrion inner membrane</keyword>
<keyword id="KW-0520">NAD</keyword>
<keyword id="KW-0679">Respiratory chain</keyword>
<keyword id="KW-1278">Translocase</keyword>
<keyword id="KW-0812">Transmembrane</keyword>
<keyword id="KW-1133">Transmembrane helix</keyword>
<keyword id="KW-0813">Transport</keyword>
<keyword id="KW-0830">Ubiquinone</keyword>
<name>NU4LM_LEPSL</name>
<sequence length="98" mass="10666">MPSISTNIILAFTAALTGMLVFRSHLMSSLLCLEGMMLSMFILSTLTIMNLHSTMSFMMPILLLVFAACEAAIGLALLVMMSNTYGLDLIQNLSLLQC</sequence>
<evidence type="ECO:0000250" key="1">
    <source>
        <dbReference type="UniProtKB" id="P03901"/>
    </source>
</evidence>
<evidence type="ECO:0000250" key="2">
    <source>
        <dbReference type="UniProtKB" id="P03902"/>
    </source>
</evidence>
<evidence type="ECO:0000255" key="3"/>
<evidence type="ECO:0000305" key="4"/>
<dbReference type="EC" id="7.1.1.2"/>
<dbReference type="EMBL" id="DQ529642">
    <property type="protein sequence ID" value="ABG73887.1"/>
    <property type="molecule type" value="Genomic_DNA"/>
</dbReference>
<dbReference type="EMBL" id="DQ529643">
    <property type="protein sequence ID" value="ABG73891.1"/>
    <property type="molecule type" value="Genomic_DNA"/>
</dbReference>
<dbReference type="EMBL" id="DQ529644">
    <property type="protein sequence ID" value="ABG73895.1"/>
    <property type="molecule type" value="Genomic_DNA"/>
</dbReference>
<dbReference type="EMBL" id="DQ529694">
    <property type="protein sequence ID" value="ABG74095.1"/>
    <property type="molecule type" value="Genomic_DNA"/>
</dbReference>
<dbReference type="SMR" id="Q00HT4"/>
<dbReference type="GO" id="GO:0005743">
    <property type="term" value="C:mitochondrial inner membrane"/>
    <property type="evidence" value="ECO:0000250"/>
    <property type="project" value="UniProtKB"/>
</dbReference>
<dbReference type="GO" id="GO:0045271">
    <property type="term" value="C:respiratory chain complex I"/>
    <property type="evidence" value="ECO:0000250"/>
    <property type="project" value="UniProtKB"/>
</dbReference>
<dbReference type="GO" id="GO:0008137">
    <property type="term" value="F:NADH dehydrogenase (ubiquinone) activity"/>
    <property type="evidence" value="ECO:0000250"/>
    <property type="project" value="UniProtKB"/>
</dbReference>
<dbReference type="GO" id="GO:0042773">
    <property type="term" value="P:ATP synthesis coupled electron transport"/>
    <property type="evidence" value="ECO:0007669"/>
    <property type="project" value="InterPro"/>
</dbReference>
<dbReference type="FunFam" id="1.10.287.3510:FF:000002">
    <property type="entry name" value="NADH-ubiquinone oxidoreductase chain 4L"/>
    <property type="match status" value="1"/>
</dbReference>
<dbReference type="Gene3D" id="1.10.287.3510">
    <property type="match status" value="1"/>
</dbReference>
<dbReference type="InterPro" id="IPR001133">
    <property type="entry name" value="NADH_UbQ_OxRdtase_chain4L/K"/>
</dbReference>
<dbReference type="InterPro" id="IPR039428">
    <property type="entry name" value="NUOK/Mnh_C1-like"/>
</dbReference>
<dbReference type="PANTHER" id="PTHR11434:SF0">
    <property type="entry name" value="NADH-UBIQUINONE OXIDOREDUCTASE CHAIN 4L"/>
    <property type="match status" value="1"/>
</dbReference>
<dbReference type="PANTHER" id="PTHR11434">
    <property type="entry name" value="NADH-UBIQUINONE OXIDOREDUCTASE SUBUNIT ND4L"/>
    <property type="match status" value="1"/>
</dbReference>
<dbReference type="Pfam" id="PF00420">
    <property type="entry name" value="Oxidored_q2"/>
    <property type="match status" value="1"/>
</dbReference>
<feature type="chain" id="PRO_0000275041" description="NADH-ubiquinone oxidoreductase chain 4L">
    <location>
        <begin position="1"/>
        <end position="98"/>
    </location>
</feature>
<feature type="transmembrane region" description="Helical" evidence="3">
    <location>
        <begin position="2"/>
        <end position="22"/>
    </location>
</feature>
<feature type="transmembrane region" description="Helical" evidence="3">
    <location>
        <begin position="29"/>
        <end position="49"/>
    </location>
</feature>
<feature type="transmembrane region" description="Helical" evidence="3">
    <location>
        <begin position="61"/>
        <end position="81"/>
    </location>
</feature>
<feature type="sequence variant" description="In strain: Isolate NARA4.20.">
    <original>T</original>
    <variation>A</variation>
    <location>
        <position position="17"/>
    </location>
</feature>
<feature type="sequence variant" description="In strain: Isolate NARA4.20.">
    <original>I</original>
    <variation>V</variation>
    <location>
        <position position="42"/>
    </location>
</feature>
<feature type="sequence variant" description="In strain: Isolate NARA4.20.">
    <original>M</original>
    <variation>I</variation>
    <location>
        <position position="58"/>
    </location>
</feature>
<feature type="sequence variant" description="In strain: Isolate NARA4.20.">
    <original>S</original>
    <variation>N</variation>
    <location>
        <position position="94"/>
    </location>
</feature>
<proteinExistence type="inferred from homology"/>